<proteinExistence type="inferred from homology"/>
<sequence length="161" mass="18090">MPSFDTVCEANLVDVRNAVENTAKEIATRFDFKGTAASITIQEREITLIGDADFQLTQIEDVLRNKLTKRSVDVRFLDIGEVRKIGGDKVKQLLKVRSGIESELARKIQKLLKDSKLKVQGAIQEDKVRVTGAKRDDLQAAMALIRKEVTDVPLSFDNFRD</sequence>
<evidence type="ECO:0000255" key="1">
    <source>
        <dbReference type="HAMAP-Rule" id="MF_00632"/>
    </source>
</evidence>
<accession>A1WNH8</accession>
<feature type="chain" id="PRO_1000051761" description="Nucleotide-binding protein Veis_3464">
    <location>
        <begin position="1"/>
        <end position="161"/>
    </location>
</feature>
<organism>
    <name type="scientific">Verminephrobacter eiseniae (strain EF01-2)</name>
    <dbReference type="NCBI Taxonomy" id="391735"/>
    <lineage>
        <taxon>Bacteria</taxon>
        <taxon>Pseudomonadati</taxon>
        <taxon>Pseudomonadota</taxon>
        <taxon>Betaproteobacteria</taxon>
        <taxon>Burkholderiales</taxon>
        <taxon>Comamonadaceae</taxon>
        <taxon>Verminephrobacter</taxon>
    </lineage>
</organism>
<gene>
    <name type="ordered locus">Veis_3464</name>
</gene>
<dbReference type="EMBL" id="CP000542">
    <property type="protein sequence ID" value="ABM59185.1"/>
    <property type="molecule type" value="Genomic_DNA"/>
</dbReference>
<dbReference type="RefSeq" id="WP_011811177.1">
    <property type="nucleotide sequence ID" value="NC_008786.1"/>
</dbReference>
<dbReference type="SMR" id="A1WNH8"/>
<dbReference type="STRING" id="391735.Veis_3464"/>
<dbReference type="GeneID" id="76461884"/>
<dbReference type="KEGG" id="vei:Veis_3464"/>
<dbReference type="eggNOG" id="COG1666">
    <property type="taxonomic scope" value="Bacteria"/>
</dbReference>
<dbReference type="HOGENOM" id="CLU_099839_1_0_4"/>
<dbReference type="OrthoDB" id="9801447at2"/>
<dbReference type="Proteomes" id="UP000000374">
    <property type="component" value="Chromosome"/>
</dbReference>
<dbReference type="GO" id="GO:0005829">
    <property type="term" value="C:cytosol"/>
    <property type="evidence" value="ECO:0007669"/>
    <property type="project" value="TreeGrafter"/>
</dbReference>
<dbReference type="GO" id="GO:0000166">
    <property type="term" value="F:nucleotide binding"/>
    <property type="evidence" value="ECO:0007669"/>
    <property type="project" value="TreeGrafter"/>
</dbReference>
<dbReference type="CDD" id="cd11740">
    <property type="entry name" value="YajQ_like"/>
    <property type="match status" value="1"/>
</dbReference>
<dbReference type="Gene3D" id="3.30.70.860">
    <property type="match status" value="1"/>
</dbReference>
<dbReference type="Gene3D" id="3.30.70.990">
    <property type="entry name" value="YajQ-like, domain 2"/>
    <property type="match status" value="1"/>
</dbReference>
<dbReference type="HAMAP" id="MF_00632">
    <property type="entry name" value="YajQ"/>
    <property type="match status" value="1"/>
</dbReference>
<dbReference type="InterPro" id="IPR007551">
    <property type="entry name" value="DUF520"/>
</dbReference>
<dbReference type="InterPro" id="IPR035571">
    <property type="entry name" value="UPF0234-like_C"/>
</dbReference>
<dbReference type="InterPro" id="IPR035570">
    <property type="entry name" value="UPF0234_N"/>
</dbReference>
<dbReference type="InterPro" id="IPR036183">
    <property type="entry name" value="YajQ-like_sf"/>
</dbReference>
<dbReference type="NCBIfam" id="NF003819">
    <property type="entry name" value="PRK05412.1"/>
    <property type="match status" value="1"/>
</dbReference>
<dbReference type="PANTHER" id="PTHR30476">
    <property type="entry name" value="UPF0234 PROTEIN YAJQ"/>
    <property type="match status" value="1"/>
</dbReference>
<dbReference type="PANTHER" id="PTHR30476:SF0">
    <property type="entry name" value="UPF0234 PROTEIN YAJQ"/>
    <property type="match status" value="1"/>
</dbReference>
<dbReference type="Pfam" id="PF04461">
    <property type="entry name" value="DUF520"/>
    <property type="match status" value="1"/>
</dbReference>
<dbReference type="SUPFAM" id="SSF89963">
    <property type="entry name" value="YajQ-like"/>
    <property type="match status" value="2"/>
</dbReference>
<protein>
    <recommendedName>
        <fullName evidence="1">Nucleotide-binding protein Veis_3464</fullName>
    </recommendedName>
</protein>
<name>Y3464_VEREI</name>
<reference key="1">
    <citation type="submission" date="2006-12" db="EMBL/GenBank/DDBJ databases">
        <title>Complete sequence of chromosome 1 of Verminephrobacter eiseniae EF01-2.</title>
        <authorList>
            <person name="Copeland A."/>
            <person name="Lucas S."/>
            <person name="Lapidus A."/>
            <person name="Barry K."/>
            <person name="Detter J.C."/>
            <person name="Glavina del Rio T."/>
            <person name="Dalin E."/>
            <person name="Tice H."/>
            <person name="Pitluck S."/>
            <person name="Chertkov O."/>
            <person name="Brettin T."/>
            <person name="Bruce D."/>
            <person name="Han C."/>
            <person name="Tapia R."/>
            <person name="Gilna P."/>
            <person name="Schmutz J."/>
            <person name="Larimer F."/>
            <person name="Land M."/>
            <person name="Hauser L."/>
            <person name="Kyrpides N."/>
            <person name="Kim E."/>
            <person name="Stahl D."/>
            <person name="Richardson P."/>
        </authorList>
    </citation>
    <scope>NUCLEOTIDE SEQUENCE [LARGE SCALE GENOMIC DNA]</scope>
    <source>
        <strain>EF01-2</strain>
    </source>
</reference>
<keyword id="KW-0547">Nucleotide-binding</keyword>
<keyword id="KW-1185">Reference proteome</keyword>
<comment type="function">
    <text evidence="1">Nucleotide-binding protein.</text>
</comment>
<comment type="similarity">
    <text evidence="1">Belongs to the YajQ family.</text>
</comment>